<name>LIPB_PSEP7</name>
<dbReference type="EC" id="2.3.1.181" evidence="1"/>
<dbReference type="EMBL" id="CP000744">
    <property type="protein sequence ID" value="ABR83742.1"/>
    <property type="molecule type" value="Genomic_DNA"/>
</dbReference>
<dbReference type="RefSeq" id="WP_003093177.1">
    <property type="nucleotide sequence ID" value="NC_009656.1"/>
</dbReference>
<dbReference type="SMR" id="A6V0B3"/>
<dbReference type="GeneID" id="77219458"/>
<dbReference type="KEGG" id="pap:PSPA7_1112"/>
<dbReference type="HOGENOM" id="CLU_035168_3_1_6"/>
<dbReference type="UniPathway" id="UPA00538">
    <property type="reaction ID" value="UER00592"/>
</dbReference>
<dbReference type="Proteomes" id="UP000001582">
    <property type="component" value="Chromosome"/>
</dbReference>
<dbReference type="GO" id="GO:0005737">
    <property type="term" value="C:cytoplasm"/>
    <property type="evidence" value="ECO:0007669"/>
    <property type="project" value="UniProtKB-SubCell"/>
</dbReference>
<dbReference type="GO" id="GO:0033819">
    <property type="term" value="F:lipoyl(octanoyl) transferase activity"/>
    <property type="evidence" value="ECO:0007669"/>
    <property type="project" value="UniProtKB-EC"/>
</dbReference>
<dbReference type="GO" id="GO:0036211">
    <property type="term" value="P:protein modification process"/>
    <property type="evidence" value="ECO:0007669"/>
    <property type="project" value="InterPro"/>
</dbReference>
<dbReference type="CDD" id="cd16444">
    <property type="entry name" value="LipB"/>
    <property type="match status" value="1"/>
</dbReference>
<dbReference type="FunFam" id="3.30.930.10:FF:000020">
    <property type="entry name" value="Octanoyltransferase"/>
    <property type="match status" value="1"/>
</dbReference>
<dbReference type="Gene3D" id="3.30.930.10">
    <property type="entry name" value="Bira Bifunctional Protein, Domain 2"/>
    <property type="match status" value="1"/>
</dbReference>
<dbReference type="HAMAP" id="MF_00013">
    <property type="entry name" value="LipB"/>
    <property type="match status" value="1"/>
</dbReference>
<dbReference type="InterPro" id="IPR045864">
    <property type="entry name" value="aa-tRNA-synth_II/BPL/LPL"/>
</dbReference>
<dbReference type="InterPro" id="IPR004143">
    <property type="entry name" value="BPL_LPL_catalytic"/>
</dbReference>
<dbReference type="InterPro" id="IPR000544">
    <property type="entry name" value="Octanoyltransferase"/>
</dbReference>
<dbReference type="InterPro" id="IPR020605">
    <property type="entry name" value="Octanoyltransferase_CS"/>
</dbReference>
<dbReference type="NCBIfam" id="TIGR00214">
    <property type="entry name" value="lipB"/>
    <property type="match status" value="1"/>
</dbReference>
<dbReference type="NCBIfam" id="NF010922">
    <property type="entry name" value="PRK14342.1"/>
    <property type="match status" value="1"/>
</dbReference>
<dbReference type="PANTHER" id="PTHR10993:SF7">
    <property type="entry name" value="LIPOYLTRANSFERASE 2, MITOCHONDRIAL-RELATED"/>
    <property type="match status" value="1"/>
</dbReference>
<dbReference type="PANTHER" id="PTHR10993">
    <property type="entry name" value="OCTANOYLTRANSFERASE"/>
    <property type="match status" value="1"/>
</dbReference>
<dbReference type="Pfam" id="PF21948">
    <property type="entry name" value="LplA-B_cat"/>
    <property type="match status" value="1"/>
</dbReference>
<dbReference type="PIRSF" id="PIRSF016262">
    <property type="entry name" value="LPLase"/>
    <property type="match status" value="1"/>
</dbReference>
<dbReference type="SUPFAM" id="SSF55681">
    <property type="entry name" value="Class II aaRS and biotin synthetases"/>
    <property type="match status" value="1"/>
</dbReference>
<dbReference type="PROSITE" id="PS51733">
    <property type="entry name" value="BPL_LPL_CATALYTIC"/>
    <property type="match status" value="1"/>
</dbReference>
<dbReference type="PROSITE" id="PS01313">
    <property type="entry name" value="LIPB"/>
    <property type="match status" value="1"/>
</dbReference>
<evidence type="ECO:0000255" key="1">
    <source>
        <dbReference type="HAMAP-Rule" id="MF_00013"/>
    </source>
</evidence>
<evidence type="ECO:0000255" key="2">
    <source>
        <dbReference type="PROSITE-ProRule" id="PRU01067"/>
    </source>
</evidence>
<sequence>MGLELGFRELGEVPYEPTWHAMQRFVAERDKSVMDEAWLLQHPAVFTQGQAGKAEHVLFPGDIPVIQVDRGGQVTYHGPGQLVTYLLLDVRRLGLGVRELVSRIEQSLIGLLASYDVQAVAKPDAPGVYVDGAKIASLGLRIRNGCSFHGLALNLDMDLRPFQRINPCGYAGMPMTQLRDLVGPVDFAEVCTRLRAELVSRLGYAEQKTLTGGIELT</sequence>
<comment type="function">
    <text evidence="1">Catalyzes the transfer of endogenously produced octanoic acid from octanoyl-acyl-carrier-protein onto the lipoyl domains of lipoate-dependent enzymes. Lipoyl-ACP can also act as a substrate although octanoyl-ACP is likely to be the physiological substrate.</text>
</comment>
<comment type="catalytic activity">
    <reaction evidence="1">
        <text>octanoyl-[ACP] + L-lysyl-[protein] = N(6)-octanoyl-L-lysyl-[protein] + holo-[ACP] + H(+)</text>
        <dbReference type="Rhea" id="RHEA:17665"/>
        <dbReference type="Rhea" id="RHEA-COMP:9636"/>
        <dbReference type="Rhea" id="RHEA-COMP:9685"/>
        <dbReference type="Rhea" id="RHEA-COMP:9752"/>
        <dbReference type="Rhea" id="RHEA-COMP:9928"/>
        <dbReference type="ChEBI" id="CHEBI:15378"/>
        <dbReference type="ChEBI" id="CHEBI:29969"/>
        <dbReference type="ChEBI" id="CHEBI:64479"/>
        <dbReference type="ChEBI" id="CHEBI:78463"/>
        <dbReference type="ChEBI" id="CHEBI:78809"/>
        <dbReference type="EC" id="2.3.1.181"/>
    </reaction>
</comment>
<comment type="pathway">
    <text evidence="1">Protein modification; protein lipoylation via endogenous pathway; protein N(6)-(lipoyl)lysine from octanoyl-[acyl-carrier-protein]: step 1/2.</text>
</comment>
<comment type="subcellular location">
    <subcellularLocation>
        <location evidence="1">Cytoplasm</location>
    </subcellularLocation>
</comment>
<comment type="miscellaneous">
    <text evidence="1">In the reaction, the free carboxyl group of octanoic acid is attached via an amide linkage to the epsilon-amino group of a specific lysine residue of lipoyl domains of lipoate-dependent enzymes.</text>
</comment>
<comment type="similarity">
    <text evidence="1">Belongs to the LipB family.</text>
</comment>
<proteinExistence type="inferred from homology"/>
<gene>
    <name evidence="1" type="primary">lipB</name>
    <name type="ordered locus">PSPA7_1112</name>
</gene>
<reference key="1">
    <citation type="submission" date="2007-06" db="EMBL/GenBank/DDBJ databases">
        <authorList>
            <person name="Dodson R.J."/>
            <person name="Harkins D."/>
            <person name="Paulsen I.T."/>
        </authorList>
    </citation>
    <scope>NUCLEOTIDE SEQUENCE [LARGE SCALE GENOMIC DNA]</scope>
    <source>
        <strain>DSM 24068 / PA7</strain>
    </source>
</reference>
<accession>A6V0B3</accession>
<protein>
    <recommendedName>
        <fullName evidence="1">Octanoyltransferase</fullName>
        <ecNumber evidence="1">2.3.1.181</ecNumber>
    </recommendedName>
    <alternativeName>
        <fullName evidence="1">Lipoate-protein ligase B</fullName>
    </alternativeName>
    <alternativeName>
        <fullName evidence="1">Lipoyl/octanoyl transferase</fullName>
    </alternativeName>
    <alternativeName>
        <fullName evidence="1">Octanoyl-[acyl-carrier-protein]-protein N-octanoyltransferase</fullName>
    </alternativeName>
</protein>
<feature type="chain" id="PRO_1000001114" description="Octanoyltransferase">
    <location>
        <begin position="1"/>
        <end position="217"/>
    </location>
</feature>
<feature type="domain" description="BPL/LPL catalytic" evidence="2">
    <location>
        <begin position="31"/>
        <end position="206"/>
    </location>
</feature>
<feature type="active site" description="Acyl-thioester intermediate" evidence="1">
    <location>
        <position position="168"/>
    </location>
</feature>
<feature type="binding site" evidence="1">
    <location>
        <begin position="70"/>
        <end position="77"/>
    </location>
    <ligand>
        <name>substrate</name>
    </ligand>
</feature>
<feature type="binding site" evidence="1">
    <location>
        <begin position="137"/>
        <end position="139"/>
    </location>
    <ligand>
        <name>substrate</name>
    </ligand>
</feature>
<feature type="binding site" evidence="1">
    <location>
        <begin position="150"/>
        <end position="152"/>
    </location>
    <ligand>
        <name>substrate</name>
    </ligand>
</feature>
<feature type="site" description="Lowers pKa of active site Cys" evidence="1">
    <location>
        <position position="134"/>
    </location>
</feature>
<keyword id="KW-0012">Acyltransferase</keyword>
<keyword id="KW-0963">Cytoplasm</keyword>
<keyword id="KW-0808">Transferase</keyword>
<organism>
    <name type="scientific">Pseudomonas paraeruginosa (strain DSM 24068 / PA7)</name>
    <name type="common">Pseudomonas aeruginosa (strain PA7)</name>
    <dbReference type="NCBI Taxonomy" id="381754"/>
    <lineage>
        <taxon>Bacteria</taxon>
        <taxon>Pseudomonadati</taxon>
        <taxon>Pseudomonadota</taxon>
        <taxon>Gammaproteobacteria</taxon>
        <taxon>Pseudomonadales</taxon>
        <taxon>Pseudomonadaceae</taxon>
        <taxon>Pseudomonas</taxon>
        <taxon>Pseudomonas paraeruginosa</taxon>
    </lineage>
</organism>